<keyword id="KW-0007">Acetylation</keyword>
<keyword id="KW-0067">ATP-binding</keyword>
<keyword id="KW-0131">Cell cycle</keyword>
<keyword id="KW-0132">Cell division</keyword>
<keyword id="KW-0175">Coiled coil</keyword>
<keyword id="KW-0498">Mitosis</keyword>
<keyword id="KW-0547">Nucleotide-binding</keyword>
<keyword id="KW-0539">Nucleus</keyword>
<keyword id="KW-1185">Reference proteome</keyword>
<organism>
    <name type="scientific">Plasmodium falciparum (isolate 3D7)</name>
    <dbReference type="NCBI Taxonomy" id="36329"/>
    <lineage>
        <taxon>Eukaryota</taxon>
        <taxon>Sar</taxon>
        <taxon>Alveolata</taxon>
        <taxon>Apicomplexa</taxon>
        <taxon>Aconoidasida</taxon>
        <taxon>Haemosporida</taxon>
        <taxon>Plasmodiidae</taxon>
        <taxon>Plasmodium</taxon>
        <taxon>Plasmodium (Laverania)</taxon>
    </lineage>
</organism>
<sequence>MYIKQIRLKGFRTYKNETTIDFTRGINCIVGFNGSGKSNILLAIEFILSDVCEYKQIYLHEGIGNAVRNCYVEIIFDNSEKYFSMFKESEIKIKKVLENMKCEIFVNDKNISKNQYVELLESCGLCINNLYNIIKQGQIIKLSNMKDEEILNYLKSILGAKIFEEKKKDALSMLKECDSKKVTIEKEFNDMNSKLESLQEEFENFLEYKKLEKEKVHLDYFLNEINYKNIYEETQMLKSKLQELKNKTQDEDNHLNLSNNNKSEYNEKLNKMKLEIASCQNHLNKTISEDIQNKRNIVHLQMLIDEKIKEKNIKESQNKNRIKNINQINEFILRVNEKLQSLKSDIVSKEKQIENKNNEINMLLSKNKNKNTDANYSHNVKKIEKMINDINIELSFLEKETIKNEKYLKELEEESKVLNKSIKENETLSQKYGSEINELNNKSEKCVEQKRQCQQKISEGTTNLNEIKCQIIEVNDKYDEIIKSSNKEILKIVDLIMAEKSIKRENILGFLIDNINVDKTYVKAVDTILENHYFTLIVEDMQTAKKIVEFIEKKREERTSKEFNFKEFYFGKLTIVPLLNIKKFNEFNYPNDKNIVPLIKCVNYNSKIYEFLKNILFKTIIVKSLESCENYLEDNYNCVNIDGDYLSKHGFMYGGYNKKKYGIYTVYNKLKELKEEEKKEKSHIEELNNNIEKIDDELRNIYDTKSSTVAKKNGCASTINSINNNIYSNEENIRLTSEKINYIQEKKQNLEQHKDQLKMQILQLRNNNVNPDESEKVGSTDINSLNDEVKKLKEELNKIRNEYDDFKNKLELLYQKRNENDSSIYMEEYEDVDIDEYNNDLADKKDHSDKIEKEKIHYEQKIREINKEMENVKSSIDKILINEKKHKKKILDLCHQMNQINEELRILEGKEENIRKKKVLLPQGIQELEEYRTYDKQQLSAKLKSVTMELKKYSNVNEKAGDRLNILMNDFNELKKRHEEINSSHKNIKDMIQHIGKKKDEALEATYVKINKYFSEYFSLLFKNRKASLVLKKMNEKEYKEKLQEMSEKRIKRRIIDEEVYIDKITGISINITSNDDEKMTYTIQELSGGERSIVAICLFLCLNKIDNFSFFFFDEIDAALDTIHRDNLSLLLKELAHRGTQFIITTFRKELLEYSDNMYIVKIVDRESYISKGTKNEAYEIISIEEKHALEN</sequence>
<dbReference type="EMBL" id="AL844503">
    <property type="protein sequence ID" value="CAD49177.1"/>
    <property type="molecule type" value="Genomic_DNA"/>
</dbReference>
<dbReference type="RefSeq" id="XP_001351448.1">
    <property type="nucleotide sequence ID" value="XM_001351412.1"/>
</dbReference>
<dbReference type="SMR" id="Q8I1U7"/>
<dbReference type="BioGRID" id="1207895">
    <property type="interactions" value="8"/>
</dbReference>
<dbReference type="FunCoup" id="Q8I1U7">
    <property type="interactions" value="597"/>
</dbReference>
<dbReference type="IntAct" id="Q8I1U7">
    <property type="interactions" value="7"/>
</dbReference>
<dbReference type="STRING" id="36329.Q8I1U7"/>
<dbReference type="PaxDb" id="5833-PFD0685c"/>
<dbReference type="EnsemblProtists" id="CAD49177">
    <property type="protein sequence ID" value="CAD49177"/>
    <property type="gene ID" value="PF3D7_0414000"/>
</dbReference>
<dbReference type="KEGG" id="pfa:PF3D7_0414000"/>
<dbReference type="VEuPathDB" id="PlasmoDB:PF3D7_0414000"/>
<dbReference type="HOGENOM" id="CLU_001042_5_0_1"/>
<dbReference type="InParanoid" id="Q8I1U7"/>
<dbReference type="OMA" id="KQVFLHE"/>
<dbReference type="OrthoDB" id="431497at2759"/>
<dbReference type="PhylomeDB" id="Q8I1U7"/>
<dbReference type="Proteomes" id="UP000001450">
    <property type="component" value="Chromosome 4"/>
</dbReference>
<dbReference type="GO" id="GO:0000785">
    <property type="term" value="C:chromatin"/>
    <property type="evidence" value="ECO:0000250"/>
    <property type="project" value="UniProtKB"/>
</dbReference>
<dbReference type="GO" id="GO:0030892">
    <property type="term" value="C:mitotic cohesin complex"/>
    <property type="evidence" value="ECO:0000250"/>
    <property type="project" value="UniProtKB"/>
</dbReference>
<dbReference type="GO" id="GO:0000228">
    <property type="term" value="C:nuclear chromosome"/>
    <property type="evidence" value="ECO:0000250"/>
    <property type="project" value="GeneDB"/>
</dbReference>
<dbReference type="GO" id="GO:0005524">
    <property type="term" value="F:ATP binding"/>
    <property type="evidence" value="ECO:0000250"/>
    <property type="project" value="GeneDB"/>
</dbReference>
<dbReference type="GO" id="GO:0016887">
    <property type="term" value="F:ATP hydrolysis activity"/>
    <property type="evidence" value="ECO:0007669"/>
    <property type="project" value="InterPro"/>
</dbReference>
<dbReference type="GO" id="GO:0003690">
    <property type="term" value="F:double-stranded DNA binding"/>
    <property type="evidence" value="ECO:0000318"/>
    <property type="project" value="GO_Central"/>
</dbReference>
<dbReference type="GO" id="GO:0003680">
    <property type="term" value="F:minor groove of adenine-thymine-rich DNA binding"/>
    <property type="evidence" value="ECO:0000250"/>
    <property type="project" value="UniProtKB"/>
</dbReference>
<dbReference type="GO" id="GO:0051301">
    <property type="term" value="P:cell division"/>
    <property type="evidence" value="ECO:0007669"/>
    <property type="project" value="UniProtKB-KW"/>
</dbReference>
<dbReference type="GO" id="GO:0051276">
    <property type="term" value="P:chromosome organization"/>
    <property type="evidence" value="ECO:0000250"/>
    <property type="project" value="GeneDB"/>
</dbReference>
<dbReference type="GO" id="GO:0006302">
    <property type="term" value="P:double-strand break repair"/>
    <property type="evidence" value="ECO:0007669"/>
    <property type="project" value="InterPro"/>
</dbReference>
<dbReference type="GO" id="GO:0007064">
    <property type="term" value="P:mitotic sister chromatid cohesion"/>
    <property type="evidence" value="ECO:0000318"/>
    <property type="project" value="GO_Central"/>
</dbReference>
<dbReference type="GO" id="GO:0000070">
    <property type="term" value="P:mitotic sister chromatid segregation"/>
    <property type="evidence" value="ECO:0000250"/>
    <property type="project" value="UniProtKB"/>
</dbReference>
<dbReference type="GO" id="GO:0006275">
    <property type="term" value="P:regulation of DNA replication"/>
    <property type="evidence" value="ECO:0000250"/>
    <property type="project" value="UniProtKB"/>
</dbReference>
<dbReference type="CDD" id="cd03272">
    <property type="entry name" value="ABC_SMC3_euk"/>
    <property type="match status" value="1"/>
</dbReference>
<dbReference type="FunFam" id="3.40.50.300:FF:001513">
    <property type="entry name" value="Structural maintenance of chromosomes protein"/>
    <property type="match status" value="1"/>
</dbReference>
<dbReference type="FunFam" id="3.40.50.300:FF:001881">
    <property type="entry name" value="Structural maintenance of chromosomes protein"/>
    <property type="match status" value="1"/>
</dbReference>
<dbReference type="Gene3D" id="1.20.1060.20">
    <property type="match status" value="1"/>
</dbReference>
<dbReference type="Gene3D" id="3.30.70.1620">
    <property type="match status" value="1"/>
</dbReference>
<dbReference type="Gene3D" id="3.40.50.300">
    <property type="entry name" value="P-loop containing nucleotide triphosphate hydrolases"/>
    <property type="match status" value="2"/>
</dbReference>
<dbReference type="InterPro" id="IPR027417">
    <property type="entry name" value="P-loop_NTPase"/>
</dbReference>
<dbReference type="InterPro" id="IPR038729">
    <property type="entry name" value="Rad50/SbcC_AAA"/>
</dbReference>
<dbReference type="InterPro" id="IPR003395">
    <property type="entry name" value="RecF/RecN/SMC_N"/>
</dbReference>
<dbReference type="InterPro" id="IPR024704">
    <property type="entry name" value="SMC"/>
</dbReference>
<dbReference type="InterPro" id="IPR041741">
    <property type="entry name" value="SMC3_ABC_euk"/>
</dbReference>
<dbReference type="InterPro" id="IPR010935">
    <property type="entry name" value="SMC_hinge"/>
</dbReference>
<dbReference type="InterPro" id="IPR036277">
    <property type="entry name" value="SMC_hinge_sf"/>
</dbReference>
<dbReference type="PANTHER" id="PTHR43977">
    <property type="entry name" value="STRUCTURAL MAINTENANCE OF CHROMOSOMES PROTEIN 3"/>
    <property type="match status" value="1"/>
</dbReference>
<dbReference type="Pfam" id="PF13476">
    <property type="entry name" value="AAA_23"/>
    <property type="match status" value="1"/>
</dbReference>
<dbReference type="Pfam" id="PF06470">
    <property type="entry name" value="SMC_hinge"/>
    <property type="match status" value="1"/>
</dbReference>
<dbReference type="Pfam" id="PF02463">
    <property type="entry name" value="SMC_N"/>
    <property type="match status" value="1"/>
</dbReference>
<dbReference type="PIRSF" id="PIRSF005719">
    <property type="entry name" value="SMC"/>
    <property type="match status" value="1"/>
</dbReference>
<dbReference type="SMART" id="SM00968">
    <property type="entry name" value="SMC_hinge"/>
    <property type="match status" value="1"/>
</dbReference>
<dbReference type="SUPFAM" id="SSF52540">
    <property type="entry name" value="P-loop containing nucleoside triphosphate hydrolases"/>
    <property type="match status" value="1"/>
</dbReference>
<dbReference type="SUPFAM" id="SSF75553">
    <property type="entry name" value="Smc hinge domain"/>
    <property type="match status" value="1"/>
</dbReference>
<feature type="chain" id="PRO_0000365117" description="Structural maintenance of chromosomes protein 3 homolog">
    <location>
        <begin position="1"/>
        <end position="1193"/>
    </location>
</feature>
<feature type="domain" description="SMC hinge">
    <location>
        <begin position="505"/>
        <end position="631"/>
    </location>
</feature>
<feature type="coiled-coil region" evidence="3">
    <location>
        <begin position="179"/>
        <end position="286"/>
    </location>
</feature>
<feature type="coiled-coil region" evidence="3">
    <location>
        <begin position="332"/>
        <end position="483"/>
    </location>
</feature>
<feature type="coiled-coil region" evidence="3">
    <location>
        <begin position="665"/>
        <end position="993"/>
    </location>
</feature>
<feature type="binding site" evidence="3">
    <location>
        <begin position="31"/>
        <end position="38"/>
    </location>
    <ligand>
        <name>ATP</name>
        <dbReference type="ChEBI" id="CHEBI:30616"/>
    </ligand>
</feature>
<feature type="modified residue" description="N6-acetyllysine" evidence="1">
    <location>
        <position position="101"/>
    </location>
</feature>
<protein>
    <recommendedName>
        <fullName>Structural maintenance of chromosomes protein 3 homolog</fullName>
    </recommendedName>
</protein>
<evidence type="ECO:0000250" key="1"/>
<evidence type="ECO:0000250" key="2">
    <source>
        <dbReference type="UniProtKB" id="P32908"/>
    </source>
</evidence>
<evidence type="ECO:0000255" key="3"/>
<evidence type="ECO:0000269" key="4">
    <source>
    </source>
</evidence>
<evidence type="ECO:0000305" key="5"/>
<evidence type="ECO:0000312" key="6">
    <source>
        <dbReference type="EMBL" id="CAD49177.1"/>
    </source>
</evidence>
<name>SMC3_PLAF7</name>
<gene>
    <name evidence="6" type="primary">PFD0685c</name>
</gene>
<accession>Q8I1U7</accession>
<comment type="function">
    <text evidence="1">Central component of cohesin, a complex required for chromosome cohesion during the cell cycle. The cohesin complex may form a large proteinaceous ring within which sister chromatids can be trapped. At anaphase, the complex is cleaved and dissociates from chromatin, allowing sister chromatids to segregate. Cohesion is coupled to DNA replication and is involved in DNA repair. The cohesin complex also plays an important role in spindle pole assembly during mitosis and in chromosomes movement (By similarity).</text>
</comment>
<comment type="subunit">
    <text evidence="2">Component of the cohesin complex.</text>
</comment>
<comment type="subcellular location">
    <subcellularLocation>
        <location evidence="2">Nucleus</location>
    </subcellularLocation>
</comment>
<comment type="domain">
    <text evidence="2">The flexible SMC hinge domain, which separates the large intramolecular coiled coil regions, allows the heterotypic interaction with the corresponding domain of SMC1A or SMC1B, forming a V-shaped heterodimer. The two heads of the heterodimer are then connected by different ends of the cleavable RAD21 protein, forming a ring structure (By similarity).</text>
</comment>
<comment type="PTM">
    <text evidence="1">Acetylation at Lys-101 by ESCO1 is important for genome stability and S phase sister chromatid cohesion.</text>
</comment>
<comment type="biotechnology">
    <text evidence="4">Possible candidate for an effective malaria vaccine as determined by epitope response in sera.</text>
</comment>
<comment type="similarity">
    <text evidence="3">Belongs to the SMC family. SMC3 subfamily.</text>
</comment>
<proteinExistence type="evidence at protein level"/>
<reference key="1">
    <citation type="journal article" date="2002" name="Nature">
        <title>Genome sequence of the human malaria parasite Plasmodium falciparum.</title>
        <authorList>
            <person name="Gardner M.J."/>
            <person name="Hall N."/>
            <person name="Fung E."/>
            <person name="White O."/>
            <person name="Berriman M."/>
            <person name="Hyman R.W."/>
            <person name="Carlton J.M."/>
            <person name="Pain A."/>
            <person name="Nelson K.E."/>
            <person name="Bowman S."/>
            <person name="Paulsen I.T."/>
            <person name="James K.D."/>
            <person name="Eisen J.A."/>
            <person name="Rutherford K.M."/>
            <person name="Salzberg S.L."/>
            <person name="Craig A."/>
            <person name="Kyes S."/>
            <person name="Chan M.-S."/>
            <person name="Nene V."/>
            <person name="Shallom S.J."/>
            <person name="Suh B."/>
            <person name="Peterson J."/>
            <person name="Angiuoli S."/>
            <person name="Pertea M."/>
            <person name="Allen J."/>
            <person name="Selengut J."/>
            <person name="Haft D."/>
            <person name="Mather M.W."/>
            <person name="Vaidya A.B."/>
            <person name="Martin D.M.A."/>
            <person name="Fairlamb A.H."/>
            <person name="Fraunholz M.J."/>
            <person name="Roos D.S."/>
            <person name="Ralph S.A."/>
            <person name="McFadden G.I."/>
            <person name="Cummings L.M."/>
            <person name="Subramanian G.M."/>
            <person name="Mungall C."/>
            <person name="Venter J.C."/>
            <person name="Carucci D.J."/>
            <person name="Hoffman S.L."/>
            <person name="Newbold C."/>
            <person name="Davis R.W."/>
            <person name="Fraser C.M."/>
            <person name="Barrell B.G."/>
        </authorList>
    </citation>
    <scope>NUCLEOTIDE SEQUENCE [LARGE SCALE GENOMIC DNA]</scope>
    <source>
        <strain>3D7</strain>
    </source>
</reference>
<reference evidence="6" key="2">
    <citation type="journal article" date="2002" name="Nature">
        <title>Sequence of Plasmodium falciparum chromosomes 1, 3-9 and 13.</title>
        <authorList>
            <person name="Hall N."/>
            <person name="Pain A."/>
            <person name="Berriman M."/>
            <person name="Churcher C.M."/>
            <person name="Harris B."/>
            <person name="Harris D."/>
            <person name="Mungall K.L."/>
            <person name="Bowman S."/>
            <person name="Atkin R."/>
            <person name="Baker S."/>
            <person name="Barron A."/>
            <person name="Brooks K."/>
            <person name="Buckee C.O."/>
            <person name="Burrows C."/>
            <person name="Cherevach I."/>
            <person name="Chillingworth C."/>
            <person name="Chillingworth T."/>
            <person name="Christodoulou Z."/>
            <person name="Clark L."/>
            <person name="Clark R."/>
            <person name="Corton C."/>
            <person name="Cronin A."/>
            <person name="Davies R.M."/>
            <person name="Davis P."/>
            <person name="Dear P."/>
            <person name="Dearden F."/>
            <person name="Doggett J."/>
            <person name="Feltwell T."/>
            <person name="Goble A."/>
            <person name="Goodhead I."/>
            <person name="Gwilliam R."/>
            <person name="Hamlin N."/>
            <person name="Hance Z."/>
            <person name="Harper D."/>
            <person name="Hauser H."/>
            <person name="Hornsby T."/>
            <person name="Holroyd S."/>
            <person name="Horrocks P."/>
            <person name="Humphray S."/>
            <person name="Jagels K."/>
            <person name="James K.D."/>
            <person name="Johnson D."/>
            <person name="Kerhornou A."/>
            <person name="Knights A."/>
            <person name="Konfortov B."/>
            <person name="Kyes S."/>
            <person name="Larke N."/>
            <person name="Lawson D."/>
            <person name="Lennard N."/>
            <person name="Line A."/>
            <person name="Maddison M."/>
            <person name="Mclean J."/>
            <person name="Mooney P."/>
            <person name="Moule S."/>
            <person name="Murphy L."/>
            <person name="Oliver K."/>
            <person name="Ormond D."/>
            <person name="Price C."/>
            <person name="Quail M.A."/>
            <person name="Rabbinowitsch E."/>
            <person name="Rajandream M.A."/>
            <person name="Rutter S."/>
            <person name="Rutherford K.M."/>
            <person name="Sanders M."/>
            <person name="Simmonds M."/>
            <person name="Seeger K."/>
            <person name="Sharp S."/>
            <person name="Smith R."/>
            <person name="Squares R."/>
            <person name="Squares S."/>
            <person name="Stevens K."/>
            <person name="Taylor K."/>
            <person name="Tivey A."/>
            <person name="Unwin L."/>
            <person name="Whitehead S."/>
            <person name="Woodward J.R."/>
            <person name="Sulston J.E."/>
            <person name="Craig A."/>
            <person name="Newbold C."/>
            <person name="Barrell B.G."/>
        </authorList>
    </citation>
    <scope>NUCLEOTIDE SEQUENCE [LARGE SCALE GENOMIC DNA]</scope>
    <source>
        <strain>3D7</strain>
    </source>
</reference>
<reference evidence="5" key="3">
    <citation type="journal article" date="2007" name="PLoS ONE">
        <title>Rapid identification of malaria vaccine candidates based on alpha-helical coiled coil protein motif.</title>
        <authorList>
            <person name="Villard V."/>
            <person name="Agak G.W."/>
            <person name="Frank G."/>
            <person name="Jafarshad A."/>
            <person name="Servis C."/>
            <person name="Nebie I."/>
            <person name="Sirima S.B."/>
            <person name="Felger I."/>
            <person name="Arevalo-Herrera M."/>
            <person name="Herrera S."/>
            <person name="Heitz F."/>
            <person name="Baecker V."/>
            <person name="Druilhe P."/>
            <person name="Kajava A.V."/>
            <person name="Corradin G."/>
        </authorList>
    </citation>
    <scope>SYNTHESIS OF 779-816</scope>
    <scope>POSSIBLE CANDIDATE MALARIA EPITOPE</scope>
</reference>